<dbReference type="EMBL" id="M38393">
    <property type="protein sequence ID" value="AAA49234.1"/>
    <property type="molecule type" value="mRNA"/>
</dbReference>
<dbReference type="PIR" id="D38625">
    <property type="entry name" value="D38625"/>
</dbReference>
<dbReference type="SMR" id="P22125"/>
<dbReference type="GO" id="GO:0005886">
    <property type="term" value="C:plasma membrane"/>
    <property type="evidence" value="ECO:0007669"/>
    <property type="project" value="UniProtKB-SubCell"/>
</dbReference>
<dbReference type="GO" id="GO:0005525">
    <property type="term" value="F:GTP binding"/>
    <property type="evidence" value="ECO:0007669"/>
    <property type="project" value="UniProtKB-KW"/>
</dbReference>
<dbReference type="GO" id="GO:0003924">
    <property type="term" value="F:GTPase activity"/>
    <property type="evidence" value="ECO:0007669"/>
    <property type="project" value="InterPro"/>
</dbReference>
<dbReference type="GO" id="GO:0015031">
    <property type="term" value="P:protein transport"/>
    <property type="evidence" value="ECO:0007669"/>
    <property type="project" value="UniProtKB-KW"/>
</dbReference>
<dbReference type="CDD" id="cd01869">
    <property type="entry name" value="Rab1_Ypt1"/>
    <property type="match status" value="1"/>
</dbReference>
<dbReference type="FunFam" id="3.40.50.300:FF:000069">
    <property type="entry name" value="Ras GTP-binding protein YPT1"/>
    <property type="match status" value="1"/>
</dbReference>
<dbReference type="Gene3D" id="3.40.50.300">
    <property type="entry name" value="P-loop containing nucleotide triphosphate hydrolases"/>
    <property type="match status" value="1"/>
</dbReference>
<dbReference type="InterPro" id="IPR027417">
    <property type="entry name" value="P-loop_NTPase"/>
</dbReference>
<dbReference type="InterPro" id="IPR050227">
    <property type="entry name" value="Rab"/>
</dbReference>
<dbReference type="InterPro" id="IPR005225">
    <property type="entry name" value="Small_GTP-bd"/>
</dbReference>
<dbReference type="InterPro" id="IPR001806">
    <property type="entry name" value="Small_GTPase"/>
</dbReference>
<dbReference type="NCBIfam" id="TIGR00231">
    <property type="entry name" value="small_GTP"/>
    <property type="match status" value="1"/>
</dbReference>
<dbReference type="PANTHER" id="PTHR47977">
    <property type="entry name" value="RAS-RELATED PROTEIN RAB"/>
    <property type="match status" value="1"/>
</dbReference>
<dbReference type="Pfam" id="PF00071">
    <property type="entry name" value="Ras"/>
    <property type="match status" value="1"/>
</dbReference>
<dbReference type="PRINTS" id="PR00449">
    <property type="entry name" value="RASTRNSFRMNG"/>
</dbReference>
<dbReference type="SMART" id="SM00177">
    <property type="entry name" value="ARF"/>
    <property type="match status" value="1"/>
</dbReference>
<dbReference type="SMART" id="SM00175">
    <property type="entry name" value="RAB"/>
    <property type="match status" value="1"/>
</dbReference>
<dbReference type="SMART" id="SM00176">
    <property type="entry name" value="RAN"/>
    <property type="match status" value="1"/>
</dbReference>
<dbReference type="SMART" id="SM00173">
    <property type="entry name" value="RAS"/>
    <property type="match status" value="1"/>
</dbReference>
<dbReference type="SMART" id="SM00174">
    <property type="entry name" value="RHO"/>
    <property type="match status" value="1"/>
</dbReference>
<dbReference type="SUPFAM" id="SSF52540">
    <property type="entry name" value="P-loop containing nucleoside triphosphate hydrolases"/>
    <property type="match status" value="1"/>
</dbReference>
<dbReference type="PROSITE" id="PS51419">
    <property type="entry name" value="RAB"/>
    <property type="match status" value="1"/>
</dbReference>
<organism>
    <name type="scientific">Diplobatis ommata</name>
    <name type="common">Ocellated electric ray</name>
    <name type="synonym">Discopyge ommata</name>
    <dbReference type="NCBI Taxonomy" id="1870830"/>
    <lineage>
        <taxon>Eukaryota</taxon>
        <taxon>Metazoa</taxon>
        <taxon>Chordata</taxon>
        <taxon>Craniata</taxon>
        <taxon>Vertebrata</taxon>
        <taxon>Chondrichthyes</taxon>
        <taxon>Elasmobranchii</taxon>
        <taxon>Batoidea</taxon>
        <taxon>Torpediniformes</taxon>
        <taxon>Narcinidae</taxon>
        <taxon>Diplobatis</taxon>
    </lineage>
</organism>
<feature type="chain" id="PRO_0000121064" description="Ras-related protein ORAB-1">
    <location>
        <begin position="1"/>
        <end position="202"/>
    </location>
</feature>
<feature type="region of interest" description="Disordered" evidence="3">
    <location>
        <begin position="173"/>
        <end position="202"/>
    </location>
</feature>
<feature type="short sequence motif" description="Effector region" evidence="1">
    <location>
        <begin position="37"/>
        <end position="45"/>
    </location>
</feature>
<feature type="compositionally biased region" description="Polar residues" evidence="3">
    <location>
        <begin position="180"/>
        <end position="195"/>
    </location>
</feature>
<feature type="binding site" evidence="2">
    <location>
        <begin position="15"/>
        <end position="23"/>
    </location>
    <ligand>
        <name>GTP</name>
        <dbReference type="ChEBI" id="CHEBI:37565"/>
    </ligand>
</feature>
<feature type="binding site" evidence="2">
    <location>
        <begin position="33"/>
        <end position="40"/>
    </location>
    <ligand>
        <name>GTP</name>
        <dbReference type="ChEBI" id="CHEBI:37565"/>
    </ligand>
</feature>
<feature type="binding site" evidence="2">
    <location>
        <begin position="63"/>
        <end position="67"/>
    </location>
    <ligand>
        <name>GTP</name>
        <dbReference type="ChEBI" id="CHEBI:37565"/>
    </ligand>
</feature>
<feature type="binding site" evidence="2">
    <location>
        <begin position="121"/>
        <end position="124"/>
    </location>
    <ligand>
        <name>GTP</name>
        <dbReference type="ChEBI" id="CHEBI:37565"/>
    </ligand>
</feature>
<feature type="binding site" evidence="2">
    <location>
        <begin position="151"/>
        <end position="153"/>
    </location>
    <ligand>
        <name>GTP</name>
        <dbReference type="ChEBI" id="CHEBI:37565"/>
    </ligand>
</feature>
<feature type="lipid moiety-binding region" description="S-geranylgeranyl cysteine" evidence="1">
    <location>
        <position position="201"/>
    </location>
</feature>
<feature type="lipid moiety-binding region" description="S-geranylgeranyl cysteine" evidence="1">
    <location>
        <position position="202"/>
    </location>
</feature>
<protein>
    <recommendedName>
        <fullName>Ras-related protein ORAB-1</fullName>
    </recommendedName>
</protein>
<keyword id="KW-1003">Cell membrane</keyword>
<keyword id="KW-0342">GTP-binding</keyword>
<keyword id="KW-0449">Lipoprotein</keyword>
<keyword id="KW-0472">Membrane</keyword>
<keyword id="KW-0547">Nucleotide-binding</keyword>
<keyword id="KW-0636">Prenylation</keyword>
<keyword id="KW-0653">Protein transport</keyword>
<keyword id="KW-0813">Transport</keyword>
<evidence type="ECO:0000250" key="1"/>
<evidence type="ECO:0000250" key="2">
    <source>
        <dbReference type="UniProtKB" id="P62820"/>
    </source>
</evidence>
<evidence type="ECO:0000256" key="3">
    <source>
        <dbReference type="SAM" id="MobiDB-lite"/>
    </source>
</evidence>
<evidence type="ECO:0000305" key="4"/>
<accession>P22125</accession>
<reference key="1">
    <citation type="journal article" date="1991" name="J. Biol. Chem.">
        <title>A family of ras-like GTP-binding proteins expressed in electromotor neurons.</title>
        <authorList>
            <person name="Ngsee J.K."/>
            <person name="Elferink L.A."/>
            <person name="Scheller R.H."/>
        </authorList>
    </citation>
    <scope>NUCLEOTIDE SEQUENCE [MRNA]</scope>
    <source>
        <tissue>Electric lobe</tissue>
    </source>
</reference>
<name>RAB1_DIPOM</name>
<sequence length="202" mass="22333">MNPEYDYLFKLLLIGDSGVGKSCLLLRFADDTYTESYISTIGVDFKIRTIELDGKTIKLQIWDTAGQERFRTITSSYYRGAHGIIVVYDVTDQESFNNVKQWLQEIDRYASENVNKLLVGNKCDLTTKKVVDYTTAKEFADSLGIPFLETSAKNATNVEQAFMTMAAEIKKRMGPGATSGGSEKSNVNIQSTPVKSSGGGCC</sequence>
<comment type="function">
    <text evidence="1">Protein transport. Probably involved in vesicular traffic (By similarity).</text>
</comment>
<comment type="subcellular location">
    <subcellularLocation>
        <location evidence="4">Cell membrane</location>
        <topology evidence="4">Lipid-anchor</topology>
        <orientation evidence="4">Cytoplasmic side</orientation>
    </subcellularLocation>
</comment>
<comment type="similarity">
    <text evidence="4">Belongs to the small GTPase superfamily. Rab family.</text>
</comment>
<proteinExistence type="evidence at transcript level"/>